<comment type="function">
    <text evidence="1">Functions as an E3 ubiquitin ligase.</text>
</comment>
<comment type="catalytic activity">
    <reaction>
        <text>S-ubiquitinyl-[E2 ubiquitin-conjugating enzyme]-L-cysteine + [acceptor protein]-L-lysine = [E2 ubiquitin-conjugating enzyme]-L-cysteine + N(6)-ubiquitinyl-[acceptor protein]-L-lysine.</text>
        <dbReference type="EC" id="2.3.2.27"/>
    </reaction>
</comment>
<comment type="pathway">
    <text>Protein modification; protein ubiquitination.</text>
</comment>
<comment type="alternative products">
    <event type="alternative splicing"/>
    <isoform>
        <id>Q9C9A6-1</id>
        <name>1</name>
        <sequence type="displayed"/>
    </isoform>
    <text>A number of isoforms are produced. According to EST sequences.</text>
</comment>
<comment type="sequence caution" evidence="2">
    <conflict type="erroneous gene model prediction">
        <sequence resource="EMBL-CDS" id="AAD55500"/>
    </conflict>
</comment>
<comment type="sequence caution" evidence="2">
    <conflict type="erroneous initiation">
        <sequence resource="EMBL-CDS" id="BAD94539"/>
    </conflict>
</comment>
<gene>
    <name type="primary">PUB10</name>
    <name type="ordered locus">At1g71020</name>
    <name type="ORF">F15H11.22</name>
    <name type="ORF">F23N20.1</name>
</gene>
<evidence type="ECO:0000250" key="1"/>
<evidence type="ECO:0000305" key="2"/>
<organism>
    <name type="scientific">Arabidopsis thaliana</name>
    <name type="common">Mouse-ear cress</name>
    <dbReference type="NCBI Taxonomy" id="3702"/>
    <lineage>
        <taxon>Eukaryota</taxon>
        <taxon>Viridiplantae</taxon>
        <taxon>Streptophyta</taxon>
        <taxon>Embryophyta</taxon>
        <taxon>Tracheophyta</taxon>
        <taxon>Spermatophyta</taxon>
        <taxon>Magnoliopsida</taxon>
        <taxon>eudicotyledons</taxon>
        <taxon>Gunneridae</taxon>
        <taxon>Pentapetalae</taxon>
        <taxon>rosids</taxon>
        <taxon>malvids</taxon>
        <taxon>Brassicales</taxon>
        <taxon>Brassicaceae</taxon>
        <taxon>Camelineae</taxon>
        <taxon>Arabidopsis</taxon>
    </lineage>
</organism>
<dbReference type="EC" id="2.3.2.27"/>
<dbReference type="EMBL" id="AC008148">
    <property type="protein sequence ID" value="AAD55500.1"/>
    <property type="status" value="ALT_SEQ"/>
    <property type="molecule type" value="Genomic_DNA"/>
</dbReference>
<dbReference type="EMBL" id="AC016972">
    <property type="protein sequence ID" value="AAG51682.1"/>
    <property type="molecule type" value="Genomic_DNA"/>
</dbReference>
<dbReference type="EMBL" id="CP002684">
    <property type="protein sequence ID" value="AEE35152.1"/>
    <property type="molecule type" value="Genomic_DNA"/>
</dbReference>
<dbReference type="EMBL" id="AY075626">
    <property type="protein sequence ID" value="AAL91637.1"/>
    <property type="molecule type" value="mRNA"/>
</dbReference>
<dbReference type="EMBL" id="AY142062">
    <property type="protein sequence ID" value="AAM98326.1"/>
    <property type="molecule type" value="mRNA"/>
</dbReference>
<dbReference type="EMBL" id="AK220971">
    <property type="protein sequence ID" value="BAD94539.1"/>
    <property type="status" value="ALT_INIT"/>
    <property type="molecule type" value="mRNA"/>
</dbReference>
<dbReference type="PIR" id="E96734">
    <property type="entry name" value="E96734"/>
</dbReference>
<dbReference type="RefSeq" id="NP_177258.3">
    <molecule id="Q9C9A6-1"/>
    <property type="nucleotide sequence ID" value="NM_105771.4"/>
</dbReference>
<dbReference type="SMR" id="Q9C9A6"/>
<dbReference type="BioGRID" id="28662">
    <property type="interactions" value="12"/>
</dbReference>
<dbReference type="FunCoup" id="Q9C9A6">
    <property type="interactions" value="791"/>
</dbReference>
<dbReference type="IntAct" id="Q9C9A6">
    <property type="interactions" value="3"/>
</dbReference>
<dbReference type="STRING" id="3702.Q9C9A6"/>
<dbReference type="PaxDb" id="3702-AT1G71020.1"/>
<dbReference type="EnsemblPlants" id="AT1G71020.1">
    <molecule id="Q9C9A6-1"/>
    <property type="protein sequence ID" value="AT1G71020.1"/>
    <property type="gene ID" value="AT1G71020"/>
</dbReference>
<dbReference type="GeneID" id="843442"/>
<dbReference type="Gramene" id="AT1G71020.1">
    <molecule id="Q9C9A6-1"/>
    <property type="protein sequence ID" value="AT1G71020.1"/>
    <property type="gene ID" value="AT1G71020"/>
</dbReference>
<dbReference type="KEGG" id="ath:AT1G71020"/>
<dbReference type="Araport" id="AT1G71020"/>
<dbReference type="TAIR" id="AT1G71020">
    <property type="gene designation" value="PUB10"/>
</dbReference>
<dbReference type="eggNOG" id="KOG0167">
    <property type="taxonomic scope" value="Eukaryota"/>
</dbReference>
<dbReference type="HOGENOM" id="CLU_006348_5_1_1"/>
<dbReference type="InParanoid" id="Q9C9A6"/>
<dbReference type="PhylomeDB" id="Q9C9A6"/>
<dbReference type="UniPathway" id="UPA00143"/>
<dbReference type="PRO" id="PR:Q9C9A6"/>
<dbReference type="Proteomes" id="UP000006548">
    <property type="component" value="Chromosome 1"/>
</dbReference>
<dbReference type="ExpressionAtlas" id="Q9C9A6">
    <property type="expression patterns" value="baseline and differential"/>
</dbReference>
<dbReference type="GO" id="GO:0005634">
    <property type="term" value="C:nucleus"/>
    <property type="evidence" value="ECO:0000314"/>
    <property type="project" value="TAIR"/>
</dbReference>
<dbReference type="GO" id="GO:0004842">
    <property type="term" value="F:ubiquitin-protein transferase activity"/>
    <property type="evidence" value="ECO:0000314"/>
    <property type="project" value="TAIR"/>
</dbReference>
<dbReference type="GO" id="GO:0051865">
    <property type="term" value="P:protein autoubiquitination"/>
    <property type="evidence" value="ECO:0000314"/>
    <property type="project" value="TAIR"/>
</dbReference>
<dbReference type="GO" id="GO:0031648">
    <property type="term" value="P:protein destabilization"/>
    <property type="evidence" value="ECO:0000315"/>
    <property type="project" value="TAIR"/>
</dbReference>
<dbReference type="GO" id="GO:0016567">
    <property type="term" value="P:protein ubiquitination"/>
    <property type="evidence" value="ECO:0000314"/>
    <property type="project" value="TAIR"/>
</dbReference>
<dbReference type="GO" id="GO:2000022">
    <property type="term" value="P:regulation of jasmonic acid mediated signaling pathway"/>
    <property type="evidence" value="ECO:0000315"/>
    <property type="project" value="TAIR"/>
</dbReference>
<dbReference type="CDD" id="cd16664">
    <property type="entry name" value="RING-Ubox_PUB"/>
    <property type="match status" value="1"/>
</dbReference>
<dbReference type="FunFam" id="1.25.10.10:FF:000343">
    <property type="entry name" value="RING-type E3 ubiquitin transferase"/>
    <property type="match status" value="1"/>
</dbReference>
<dbReference type="FunFam" id="1.25.10.10:FF:000698">
    <property type="entry name" value="RING-type E3 ubiquitin transferase"/>
    <property type="match status" value="1"/>
</dbReference>
<dbReference type="FunFam" id="3.30.40.10:FF:000292">
    <property type="entry name" value="RING-type E3 ubiquitin transferase"/>
    <property type="match status" value="1"/>
</dbReference>
<dbReference type="Gene3D" id="1.25.10.10">
    <property type="entry name" value="Leucine-rich Repeat Variant"/>
    <property type="match status" value="2"/>
</dbReference>
<dbReference type="Gene3D" id="3.30.40.10">
    <property type="entry name" value="Zinc/RING finger domain, C3HC4 (zinc finger)"/>
    <property type="match status" value="1"/>
</dbReference>
<dbReference type="InterPro" id="IPR011989">
    <property type="entry name" value="ARM-like"/>
</dbReference>
<dbReference type="InterPro" id="IPR016024">
    <property type="entry name" value="ARM-type_fold"/>
</dbReference>
<dbReference type="InterPro" id="IPR000225">
    <property type="entry name" value="Armadillo"/>
</dbReference>
<dbReference type="InterPro" id="IPR045210">
    <property type="entry name" value="RING-Ubox_PUB"/>
</dbReference>
<dbReference type="InterPro" id="IPR003613">
    <property type="entry name" value="Ubox_domain"/>
</dbReference>
<dbReference type="InterPro" id="IPR013083">
    <property type="entry name" value="Znf_RING/FYVE/PHD"/>
</dbReference>
<dbReference type="PANTHER" id="PTHR23315">
    <property type="entry name" value="U BOX DOMAIN-CONTAINING"/>
    <property type="match status" value="1"/>
</dbReference>
<dbReference type="PANTHER" id="PTHR23315:SF52">
    <property type="entry name" value="U-BOX DOMAIN-CONTAINING PROTEIN 10"/>
    <property type="match status" value="1"/>
</dbReference>
<dbReference type="Pfam" id="PF00514">
    <property type="entry name" value="Arm"/>
    <property type="match status" value="3"/>
</dbReference>
<dbReference type="Pfam" id="PF25368">
    <property type="entry name" value="PUB10_N"/>
    <property type="match status" value="1"/>
</dbReference>
<dbReference type="Pfam" id="PF04564">
    <property type="entry name" value="U-box"/>
    <property type="match status" value="1"/>
</dbReference>
<dbReference type="SMART" id="SM00185">
    <property type="entry name" value="ARM"/>
    <property type="match status" value="5"/>
</dbReference>
<dbReference type="SMART" id="SM00504">
    <property type="entry name" value="Ubox"/>
    <property type="match status" value="1"/>
</dbReference>
<dbReference type="SUPFAM" id="SSF48371">
    <property type="entry name" value="ARM repeat"/>
    <property type="match status" value="1"/>
</dbReference>
<dbReference type="SUPFAM" id="SSF57850">
    <property type="entry name" value="RING/U-box"/>
    <property type="match status" value="1"/>
</dbReference>
<dbReference type="PROSITE" id="PS50176">
    <property type="entry name" value="ARM_REPEAT"/>
    <property type="match status" value="2"/>
</dbReference>
<dbReference type="PROSITE" id="PS51698">
    <property type="entry name" value="U_BOX"/>
    <property type="match status" value="1"/>
</dbReference>
<reference key="1">
    <citation type="journal article" date="2000" name="Nature">
        <title>Sequence and analysis of chromosome 1 of the plant Arabidopsis thaliana.</title>
        <authorList>
            <person name="Theologis A."/>
            <person name="Ecker J.R."/>
            <person name="Palm C.J."/>
            <person name="Federspiel N.A."/>
            <person name="Kaul S."/>
            <person name="White O."/>
            <person name="Alonso J."/>
            <person name="Altafi H."/>
            <person name="Araujo R."/>
            <person name="Bowman C.L."/>
            <person name="Brooks S.Y."/>
            <person name="Buehler E."/>
            <person name="Chan A."/>
            <person name="Chao Q."/>
            <person name="Chen H."/>
            <person name="Cheuk R.F."/>
            <person name="Chin C.W."/>
            <person name="Chung M.K."/>
            <person name="Conn L."/>
            <person name="Conway A.B."/>
            <person name="Conway A.R."/>
            <person name="Creasy T.H."/>
            <person name="Dewar K."/>
            <person name="Dunn P."/>
            <person name="Etgu P."/>
            <person name="Feldblyum T.V."/>
            <person name="Feng J.-D."/>
            <person name="Fong B."/>
            <person name="Fujii C.Y."/>
            <person name="Gill J.E."/>
            <person name="Goldsmith A.D."/>
            <person name="Haas B."/>
            <person name="Hansen N.F."/>
            <person name="Hughes B."/>
            <person name="Huizar L."/>
            <person name="Hunter J.L."/>
            <person name="Jenkins J."/>
            <person name="Johnson-Hopson C."/>
            <person name="Khan S."/>
            <person name="Khaykin E."/>
            <person name="Kim C.J."/>
            <person name="Koo H.L."/>
            <person name="Kremenetskaia I."/>
            <person name="Kurtz D.B."/>
            <person name="Kwan A."/>
            <person name="Lam B."/>
            <person name="Langin-Hooper S."/>
            <person name="Lee A."/>
            <person name="Lee J.M."/>
            <person name="Lenz C.A."/>
            <person name="Li J.H."/>
            <person name="Li Y.-P."/>
            <person name="Lin X."/>
            <person name="Liu S.X."/>
            <person name="Liu Z.A."/>
            <person name="Luros J.S."/>
            <person name="Maiti R."/>
            <person name="Marziali A."/>
            <person name="Militscher J."/>
            <person name="Miranda M."/>
            <person name="Nguyen M."/>
            <person name="Nierman W.C."/>
            <person name="Osborne B.I."/>
            <person name="Pai G."/>
            <person name="Peterson J."/>
            <person name="Pham P.K."/>
            <person name="Rizzo M."/>
            <person name="Rooney T."/>
            <person name="Rowley D."/>
            <person name="Sakano H."/>
            <person name="Salzberg S.L."/>
            <person name="Schwartz J.R."/>
            <person name="Shinn P."/>
            <person name="Southwick A.M."/>
            <person name="Sun H."/>
            <person name="Tallon L.J."/>
            <person name="Tambunga G."/>
            <person name="Toriumi M.J."/>
            <person name="Town C.D."/>
            <person name="Utterback T."/>
            <person name="Van Aken S."/>
            <person name="Vaysberg M."/>
            <person name="Vysotskaia V.S."/>
            <person name="Walker M."/>
            <person name="Wu D."/>
            <person name="Yu G."/>
            <person name="Fraser C.M."/>
            <person name="Venter J.C."/>
            <person name="Davis R.W."/>
        </authorList>
    </citation>
    <scope>NUCLEOTIDE SEQUENCE [LARGE SCALE GENOMIC DNA]</scope>
    <source>
        <strain>cv. Columbia</strain>
    </source>
</reference>
<reference key="2">
    <citation type="journal article" date="2017" name="Plant J.">
        <title>Araport11: a complete reannotation of the Arabidopsis thaliana reference genome.</title>
        <authorList>
            <person name="Cheng C.Y."/>
            <person name="Krishnakumar V."/>
            <person name="Chan A.P."/>
            <person name="Thibaud-Nissen F."/>
            <person name="Schobel S."/>
            <person name="Town C.D."/>
        </authorList>
    </citation>
    <scope>GENOME REANNOTATION</scope>
    <source>
        <strain>cv. Columbia</strain>
    </source>
</reference>
<reference key="3">
    <citation type="journal article" date="2003" name="Science">
        <title>Empirical analysis of transcriptional activity in the Arabidopsis genome.</title>
        <authorList>
            <person name="Yamada K."/>
            <person name="Lim J."/>
            <person name="Dale J.M."/>
            <person name="Chen H."/>
            <person name="Shinn P."/>
            <person name="Palm C.J."/>
            <person name="Southwick A.M."/>
            <person name="Wu H.C."/>
            <person name="Kim C.J."/>
            <person name="Nguyen M."/>
            <person name="Pham P.K."/>
            <person name="Cheuk R.F."/>
            <person name="Karlin-Newmann G."/>
            <person name="Liu S.X."/>
            <person name="Lam B."/>
            <person name="Sakano H."/>
            <person name="Wu T."/>
            <person name="Yu G."/>
            <person name="Miranda M."/>
            <person name="Quach H.L."/>
            <person name="Tripp M."/>
            <person name="Chang C.H."/>
            <person name="Lee J.M."/>
            <person name="Toriumi M.J."/>
            <person name="Chan M.M."/>
            <person name="Tang C.C."/>
            <person name="Onodera C.S."/>
            <person name="Deng J.M."/>
            <person name="Akiyama K."/>
            <person name="Ansari Y."/>
            <person name="Arakawa T."/>
            <person name="Banh J."/>
            <person name="Banno F."/>
            <person name="Bowser L."/>
            <person name="Brooks S.Y."/>
            <person name="Carninci P."/>
            <person name="Chao Q."/>
            <person name="Choy N."/>
            <person name="Enju A."/>
            <person name="Goldsmith A.D."/>
            <person name="Gurjal M."/>
            <person name="Hansen N.F."/>
            <person name="Hayashizaki Y."/>
            <person name="Johnson-Hopson C."/>
            <person name="Hsuan V.W."/>
            <person name="Iida K."/>
            <person name="Karnes M."/>
            <person name="Khan S."/>
            <person name="Koesema E."/>
            <person name="Ishida J."/>
            <person name="Jiang P.X."/>
            <person name="Jones T."/>
            <person name="Kawai J."/>
            <person name="Kamiya A."/>
            <person name="Meyers C."/>
            <person name="Nakajima M."/>
            <person name="Narusaka M."/>
            <person name="Seki M."/>
            <person name="Sakurai T."/>
            <person name="Satou M."/>
            <person name="Tamse R."/>
            <person name="Vaysberg M."/>
            <person name="Wallender E.K."/>
            <person name="Wong C."/>
            <person name="Yamamura Y."/>
            <person name="Yuan S."/>
            <person name="Shinozaki K."/>
            <person name="Davis R.W."/>
            <person name="Theologis A."/>
            <person name="Ecker J.R."/>
        </authorList>
    </citation>
    <scope>NUCLEOTIDE SEQUENCE [LARGE SCALE MRNA]</scope>
    <source>
        <strain>cv. Columbia</strain>
    </source>
</reference>
<reference key="4">
    <citation type="submission" date="2005-03" db="EMBL/GenBank/DDBJ databases">
        <title>Large-scale analysis of RIKEN Arabidopsis full-length (RAFL) cDNAs.</title>
        <authorList>
            <person name="Totoki Y."/>
            <person name="Seki M."/>
            <person name="Ishida J."/>
            <person name="Nakajima M."/>
            <person name="Enju A."/>
            <person name="Kamiya A."/>
            <person name="Narusaka M."/>
            <person name="Shin-i T."/>
            <person name="Nakagawa M."/>
            <person name="Sakamoto N."/>
            <person name="Oishi K."/>
            <person name="Kohara Y."/>
            <person name="Kobayashi M."/>
            <person name="Toyoda A."/>
            <person name="Sakaki Y."/>
            <person name="Sakurai T."/>
            <person name="Iida K."/>
            <person name="Akiyama K."/>
            <person name="Satou M."/>
            <person name="Toyoda T."/>
            <person name="Konagaya A."/>
            <person name="Carninci P."/>
            <person name="Kawai J."/>
            <person name="Hayashizaki Y."/>
            <person name="Shinozaki K."/>
        </authorList>
    </citation>
    <scope>NUCLEOTIDE SEQUENCE [LARGE SCALE MRNA] OF 419-628</scope>
    <source>
        <strain>cv. Columbia</strain>
    </source>
</reference>
<reference key="5">
    <citation type="journal article" date="2001" name="Trends Plant Sci.">
        <title>The U-box protein family in plants.</title>
        <authorList>
            <person name="Azevedo C."/>
            <person name="Santos-Rosa M.J."/>
            <person name="Shirasu K."/>
        </authorList>
    </citation>
    <scope>GENE FAMILY ORGANIZATION</scope>
    <scope>NOMENCLATURE</scope>
</reference>
<reference key="6">
    <citation type="journal article" date="2004" name="Plant Physiol.">
        <title>A large complement of the predicted Arabidopsis ARM repeat proteins are members of the U-box E3 ubiquitin ligase family.</title>
        <authorList>
            <person name="Mudgil Y."/>
            <person name="Shiu S.-H."/>
            <person name="Stone S.L."/>
            <person name="Salt J.N."/>
            <person name="Goring D.R."/>
        </authorList>
    </citation>
    <scope>GENE FAMILY ORGANIZATION</scope>
</reference>
<sequence>MAGGAITPDSLIGLIAEINEIPGNFGLFKKDCSDLARRVGLLTHLIEEIRDSSPPSESDASSSLNSHECDWWSDLVVGLQAAKRLLSSATSFQARESSDGAAKRISFQFQCVTWKLEKALGDLTYDRYDISDEVREQVELARLQLRRAMQRYGSLNSKKFSSGLSEPMEKDASSNRKVIEKLESIPETVHSLSDEKKFESPPPWKSSSVSLAFFLSKDGDDERLEKAVTENSDDSQKSDNLTIPEDFLCPISLELMKDPAIVSTGQTYERSFIQRWIDCGNLSCPKTQQKLENFTLTPNYVLRSLISQWCTKHNIEQPGGYMNGRTKNSDGSFRDLSGDMSAIRALVCKLSSQSIEDRRTAVSEIRSLSKRSTDNRILIAEAGAIPVLVKLLTSDGDTETQENAVTCILNLSIYEHNKELIMLAGAVTSIVLVLRAGSMEARENAAATLFSLSLADENKIIIGASGAIMALVDLLQYGSVRGKKDAATALFNLCIYQGNKGRAVRAGIVKPLVKMLTDSSSERMADEALTILSVLASNQVAKTAILRANAIPPLIDCLQKDQPRNRENAAAILLCLCKRDTEKLISIGRLGAVVPLMELSRDGTERAKRKANSLLELLRKSSRKLGSL</sequence>
<protein>
    <recommendedName>
        <fullName>U-box domain-containing protein 10</fullName>
        <ecNumber>2.3.2.27</ecNumber>
    </recommendedName>
    <alternativeName>
        <fullName>Plant U-box protein 10</fullName>
    </alternativeName>
    <alternativeName>
        <fullName evidence="2">RING-type E3 ubiquitin transferase PUB10</fullName>
    </alternativeName>
</protein>
<accession>Q9C9A6</accession>
<accession>Q56ZJ4</accession>
<accession>Q9SSJ6</accession>
<name>PUB10_ARATH</name>
<proteinExistence type="evidence at transcript level"/>
<keyword id="KW-0025">Alternative splicing</keyword>
<keyword id="KW-1185">Reference proteome</keyword>
<keyword id="KW-0677">Repeat</keyword>
<keyword id="KW-0808">Transferase</keyword>
<keyword id="KW-0833">Ubl conjugation pathway</keyword>
<feature type="chain" id="PRO_0000322155" description="U-box domain-containing protein 10">
    <location>
        <begin position="1"/>
        <end position="628"/>
    </location>
</feature>
<feature type="domain" description="U-box">
    <location>
        <begin position="242"/>
        <end position="316"/>
    </location>
</feature>
<feature type="repeat" description="ARM 1">
    <location>
        <begin position="373"/>
        <end position="413"/>
    </location>
</feature>
<feature type="repeat" description="ARM 2">
    <location>
        <begin position="415"/>
        <end position="454"/>
    </location>
</feature>
<feature type="repeat" description="ARM 3">
    <location>
        <begin position="456"/>
        <end position="495"/>
    </location>
</feature>
<feature type="repeat" description="ARM 4">
    <location>
        <begin position="497"/>
        <end position="537"/>
    </location>
</feature>
<feature type="repeat" description="ARM 5">
    <location>
        <begin position="539"/>
        <end position="578"/>
    </location>
</feature>